<dbReference type="EC" id="6.3.2.6" evidence="1"/>
<dbReference type="EMBL" id="AP011115">
    <property type="protein sequence ID" value="BAH53149.1"/>
    <property type="molecule type" value="Genomic_DNA"/>
</dbReference>
<dbReference type="RefSeq" id="WP_015888661.1">
    <property type="nucleotide sequence ID" value="NC_012522.1"/>
</dbReference>
<dbReference type="SMR" id="C1AT85"/>
<dbReference type="STRING" id="632772.ROP_49020"/>
<dbReference type="KEGG" id="rop:ROP_49020"/>
<dbReference type="PATRIC" id="fig|632772.20.peg.5122"/>
<dbReference type="HOGENOM" id="CLU_045637_0_0_11"/>
<dbReference type="OrthoDB" id="9801549at2"/>
<dbReference type="UniPathway" id="UPA00074">
    <property type="reaction ID" value="UER00131"/>
</dbReference>
<dbReference type="Proteomes" id="UP000002212">
    <property type="component" value="Chromosome"/>
</dbReference>
<dbReference type="GO" id="GO:0005737">
    <property type="term" value="C:cytoplasm"/>
    <property type="evidence" value="ECO:0007669"/>
    <property type="project" value="TreeGrafter"/>
</dbReference>
<dbReference type="GO" id="GO:0005524">
    <property type="term" value="F:ATP binding"/>
    <property type="evidence" value="ECO:0007669"/>
    <property type="project" value="UniProtKB-KW"/>
</dbReference>
<dbReference type="GO" id="GO:0004639">
    <property type="term" value="F:phosphoribosylaminoimidazolesuccinocarboxamide synthase activity"/>
    <property type="evidence" value="ECO:0007669"/>
    <property type="project" value="UniProtKB-UniRule"/>
</dbReference>
<dbReference type="GO" id="GO:0006189">
    <property type="term" value="P:'de novo' IMP biosynthetic process"/>
    <property type="evidence" value="ECO:0007669"/>
    <property type="project" value="UniProtKB-UniRule"/>
</dbReference>
<dbReference type="CDD" id="cd01414">
    <property type="entry name" value="SAICAR_synt_Sc"/>
    <property type="match status" value="1"/>
</dbReference>
<dbReference type="FunFam" id="3.30.470.20:FF:000015">
    <property type="entry name" value="Phosphoribosylaminoimidazole-succinocarboxamide synthase"/>
    <property type="match status" value="1"/>
</dbReference>
<dbReference type="Gene3D" id="3.30.470.20">
    <property type="entry name" value="ATP-grasp fold, B domain"/>
    <property type="match status" value="1"/>
</dbReference>
<dbReference type="Gene3D" id="3.30.200.20">
    <property type="entry name" value="Phosphorylase Kinase, domain 1"/>
    <property type="match status" value="1"/>
</dbReference>
<dbReference type="HAMAP" id="MF_00137">
    <property type="entry name" value="SAICAR_synth"/>
    <property type="match status" value="1"/>
</dbReference>
<dbReference type="InterPro" id="IPR028923">
    <property type="entry name" value="SAICAR_synt/ADE2_N"/>
</dbReference>
<dbReference type="InterPro" id="IPR001636">
    <property type="entry name" value="SAICAR_synth"/>
</dbReference>
<dbReference type="InterPro" id="IPR018236">
    <property type="entry name" value="SAICAR_synthetase_CS"/>
</dbReference>
<dbReference type="NCBIfam" id="NF010568">
    <property type="entry name" value="PRK13961.1"/>
    <property type="match status" value="1"/>
</dbReference>
<dbReference type="NCBIfam" id="TIGR00081">
    <property type="entry name" value="purC"/>
    <property type="match status" value="1"/>
</dbReference>
<dbReference type="PANTHER" id="PTHR43700">
    <property type="entry name" value="PHOSPHORIBOSYLAMINOIMIDAZOLE-SUCCINOCARBOXAMIDE SYNTHASE"/>
    <property type="match status" value="1"/>
</dbReference>
<dbReference type="PANTHER" id="PTHR43700:SF1">
    <property type="entry name" value="PHOSPHORIBOSYLAMINOIMIDAZOLE-SUCCINOCARBOXAMIDE SYNTHASE"/>
    <property type="match status" value="1"/>
</dbReference>
<dbReference type="Pfam" id="PF01259">
    <property type="entry name" value="SAICAR_synt"/>
    <property type="match status" value="1"/>
</dbReference>
<dbReference type="SUPFAM" id="SSF56104">
    <property type="entry name" value="SAICAR synthase-like"/>
    <property type="match status" value="1"/>
</dbReference>
<dbReference type="PROSITE" id="PS01057">
    <property type="entry name" value="SAICAR_SYNTHETASE_1"/>
    <property type="match status" value="1"/>
</dbReference>
<dbReference type="PROSITE" id="PS01058">
    <property type="entry name" value="SAICAR_SYNTHETASE_2"/>
    <property type="match status" value="1"/>
</dbReference>
<keyword id="KW-0067">ATP-binding</keyword>
<keyword id="KW-0436">Ligase</keyword>
<keyword id="KW-0547">Nucleotide-binding</keyword>
<keyword id="KW-0658">Purine biosynthesis</keyword>
<comment type="catalytic activity">
    <reaction evidence="1">
        <text>5-amino-1-(5-phospho-D-ribosyl)imidazole-4-carboxylate + L-aspartate + ATP = (2S)-2-[5-amino-1-(5-phospho-beta-D-ribosyl)imidazole-4-carboxamido]succinate + ADP + phosphate + 2 H(+)</text>
        <dbReference type="Rhea" id="RHEA:22628"/>
        <dbReference type="ChEBI" id="CHEBI:15378"/>
        <dbReference type="ChEBI" id="CHEBI:29991"/>
        <dbReference type="ChEBI" id="CHEBI:30616"/>
        <dbReference type="ChEBI" id="CHEBI:43474"/>
        <dbReference type="ChEBI" id="CHEBI:58443"/>
        <dbReference type="ChEBI" id="CHEBI:77657"/>
        <dbReference type="ChEBI" id="CHEBI:456216"/>
        <dbReference type="EC" id="6.3.2.6"/>
    </reaction>
</comment>
<comment type="pathway">
    <text evidence="1">Purine metabolism; IMP biosynthesis via de novo pathway; 5-amino-1-(5-phospho-D-ribosyl)imidazole-4-carboxamide from 5-amino-1-(5-phospho-D-ribosyl)imidazole-4-carboxylate: step 1/2.</text>
</comment>
<comment type="similarity">
    <text evidence="1">Belongs to the SAICAR synthetase family.</text>
</comment>
<sequence>MRPSLDSYAHLAGGKVRDLYTIDDEHLLLVASDRISAYDHVLSTPIPDKGRVLTAMSVFFFGVLGGNNHLAGEPDDSRIPEEVLGRALVVRKLNMVPVECVARGYLTGSGLIDYNETGAVCGVALPEGLVEASQLPDPIFTPARKAELGEHDENISFEAVVEKVGQDLAVKLRDDTLDVYGRASNFAADRGIILADTKLEFGLDAQNNLILADEVLTPDSSRYWPADGYEAGKVQPSFDKQFVRNWLTGPESGWDRASDTPPPPLPAEIVEATRARYIEAYERISGLSFADWVG</sequence>
<accession>C1AT85</accession>
<name>PUR7_RHOOB</name>
<gene>
    <name evidence="1" type="primary">purC</name>
    <name type="ordered locus">ROP_49020</name>
</gene>
<feature type="chain" id="PRO_1000122925" description="Phosphoribosylaminoimidazole-succinocarboxamide synthase">
    <location>
        <begin position="1"/>
        <end position="294"/>
    </location>
</feature>
<organism>
    <name type="scientific">Rhodococcus opacus (strain B4)</name>
    <dbReference type="NCBI Taxonomy" id="632772"/>
    <lineage>
        <taxon>Bacteria</taxon>
        <taxon>Bacillati</taxon>
        <taxon>Actinomycetota</taxon>
        <taxon>Actinomycetes</taxon>
        <taxon>Mycobacteriales</taxon>
        <taxon>Nocardiaceae</taxon>
        <taxon>Rhodococcus</taxon>
    </lineage>
</organism>
<protein>
    <recommendedName>
        <fullName evidence="1">Phosphoribosylaminoimidazole-succinocarboxamide synthase</fullName>
        <ecNumber evidence="1">6.3.2.6</ecNumber>
    </recommendedName>
    <alternativeName>
        <fullName evidence="1">SAICAR synthetase</fullName>
    </alternativeName>
</protein>
<evidence type="ECO:0000255" key="1">
    <source>
        <dbReference type="HAMAP-Rule" id="MF_00137"/>
    </source>
</evidence>
<proteinExistence type="inferred from homology"/>
<reference key="1">
    <citation type="submission" date="2009-03" db="EMBL/GenBank/DDBJ databases">
        <title>Comparison of the complete genome sequences of Rhodococcus erythropolis PR4 and Rhodococcus opacus B4.</title>
        <authorList>
            <person name="Takarada H."/>
            <person name="Sekine M."/>
            <person name="Hosoyama A."/>
            <person name="Yamada R."/>
            <person name="Fujisawa T."/>
            <person name="Omata S."/>
            <person name="Shimizu A."/>
            <person name="Tsukatani N."/>
            <person name="Tanikawa S."/>
            <person name="Fujita N."/>
            <person name="Harayama S."/>
        </authorList>
    </citation>
    <scope>NUCLEOTIDE SEQUENCE [LARGE SCALE GENOMIC DNA]</scope>
    <source>
        <strain>B4</strain>
    </source>
</reference>